<keyword id="KW-0025">Alternative splicing</keyword>
<keyword id="KW-0037">Angiogenesis</keyword>
<keyword id="KW-0053">Apoptosis</keyword>
<keyword id="KW-0130">Cell adhesion</keyword>
<keyword id="KW-1003">Cell membrane</keyword>
<keyword id="KW-0903">Direct protein sequencing</keyword>
<keyword id="KW-1015">Disulfide bond</keyword>
<keyword id="KW-0325">Glycoprotein</keyword>
<keyword id="KW-0393">Immunoglobulin domain</keyword>
<keyword id="KW-0395">Inflammatory response</keyword>
<keyword id="KW-0472">Membrane</keyword>
<keyword id="KW-0597">Phosphoprotein</keyword>
<keyword id="KW-0873">Pyrrolidone carboxylic acid</keyword>
<keyword id="KW-1185">Reference proteome</keyword>
<keyword id="KW-0732">Signal</keyword>
<keyword id="KW-0812">Transmembrane</keyword>
<keyword id="KW-1133">Transmembrane helix</keyword>
<evidence type="ECO:0000250" key="1">
    <source>
        <dbReference type="UniProtKB" id="P97829"/>
    </source>
</evidence>
<evidence type="ECO:0000250" key="2">
    <source>
        <dbReference type="UniProtKB" id="Q08722"/>
    </source>
</evidence>
<evidence type="ECO:0000255" key="3"/>
<evidence type="ECO:0000255" key="4">
    <source>
        <dbReference type="PROSITE-ProRule" id="PRU00114"/>
    </source>
</evidence>
<evidence type="ECO:0000269" key="5">
    <source>
    </source>
</evidence>
<evidence type="ECO:0000269" key="6">
    <source>
    </source>
</evidence>
<evidence type="ECO:0000269" key="7">
    <source>
    </source>
</evidence>
<evidence type="ECO:0000269" key="8">
    <source>
    </source>
</evidence>
<evidence type="ECO:0000269" key="9">
    <source>
    </source>
</evidence>
<evidence type="ECO:0000269" key="10">
    <source>
    </source>
</evidence>
<evidence type="ECO:0000269" key="11">
    <source>
    </source>
</evidence>
<evidence type="ECO:0000269" key="12">
    <source>
    </source>
</evidence>
<evidence type="ECO:0000303" key="13">
    <source>
    </source>
</evidence>
<evidence type="ECO:0000303" key="14">
    <source>
    </source>
</evidence>
<evidence type="ECO:0000303" key="15">
    <source>
    </source>
</evidence>
<evidence type="ECO:0000305" key="16"/>
<name>CD47_MOUSE</name>
<organism>
    <name type="scientific">Mus musculus</name>
    <name type="common">Mouse</name>
    <dbReference type="NCBI Taxonomy" id="10090"/>
    <lineage>
        <taxon>Eukaryota</taxon>
        <taxon>Metazoa</taxon>
        <taxon>Chordata</taxon>
        <taxon>Craniata</taxon>
        <taxon>Vertebrata</taxon>
        <taxon>Euteleostomi</taxon>
        <taxon>Mammalia</taxon>
        <taxon>Eutheria</taxon>
        <taxon>Euarchontoglires</taxon>
        <taxon>Glires</taxon>
        <taxon>Rodentia</taxon>
        <taxon>Myomorpha</taxon>
        <taxon>Muroidea</taxon>
        <taxon>Muridae</taxon>
        <taxon>Murinae</taxon>
        <taxon>Mus</taxon>
        <taxon>Mus</taxon>
    </lineage>
</organism>
<feature type="signal peptide" evidence="3">
    <location>
        <begin position="1"/>
        <end position="18"/>
    </location>
</feature>
<feature type="chain" id="PRO_0000042206" description="Leukocyte surface antigen CD47">
    <location>
        <begin position="19"/>
        <end position="303"/>
    </location>
</feature>
<feature type="topological domain" description="Extracellular" evidence="3">
    <location>
        <begin position="19"/>
        <end position="140"/>
    </location>
</feature>
<feature type="transmembrane region" description="Helical" evidence="3">
    <location>
        <begin position="141"/>
        <end position="161"/>
    </location>
</feature>
<feature type="topological domain" description="Cytoplasmic" evidence="3">
    <location>
        <begin position="162"/>
        <end position="173"/>
    </location>
</feature>
<feature type="transmembrane region" description="Helical" evidence="3">
    <location>
        <begin position="174"/>
        <end position="194"/>
    </location>
</feature>
<feature type="topological domain" description="Extracellular" evidence="3">
    <location>
        <begin position="195"/>
        <end position="206"/>
    </location>
</feature>
<feature type="transmembrane region" description="Helical" evidence="3">
    <location>
        <begin position="207"/>
        <end position="227"/>
    </location>
</feature>
<feature type="topological domain" description="Cytoplasmic" evidence="3">
    <location>
        <begin position="228"/>
        <end position="238"/>
    </location>
</feature>
<feature type="transmembrane region" description="Helical" evidence="3">
    <location>
        <begin position="239"/>
        <end position="259"/>
    </location>
</feature>
<feature type="topological domain" description="Extracellular" evidence="3">
    <location>
        <begin position="260"/>
        <end position="266"/>
    </location>
</feature>
<feature type="transmembrane region" description="Helical" evidence="3">
    <location>
        <begin position="267"/>
        <end position="287"/>
    </location>
</feature>
<feature type="topological domain" description="Cytoplasmic" evidence="3">
    <location>
        <begin position="288"/>
        <end position="303"/>
    </location>
</feature>
<feature type="domain" description="Ig-like V-type">
    <location>
        <begin position="19"/>
        <end position="125"/>
    </location>
</feature>
<feature type="modified residue" description="Pyrrolidone carboxylic acid" evidence="2 16">
    <location>
        <position position="19"/>
    </location>
</feature>
<feature type="modified residue" description="Phosphoserine" evidence="1">
    <location>
        <position position="87"/>
    </location>
</feature>
<feature type="modified residue" description="Phosphoserine" evidence="1">
    <location>
        <position position="89"/>
    </location>
</feature>
<feature type="glycosylation site" description="N-linked (GlcNAc...) asparagine" evidence="3">
    <location>
        <position position="34"/>
    </location>
</feature>
<feature type="glycosylation site" description="N-linked (GlcNAc...) asparagine" evidence="3">
    <location>
        <position position="61"/>
    </location>
</feature>
<feature type="glycosylation site" description="N-linked (GlcNAc...) asparagine" evidence="3">
    <location>
        <position position="73"/>
    </location>
</feature>
<feature type="glycosylation site" description="N-linked (GlcNAc...) asparagine" evidence="3">
    <location>
        <position position="80"/>
    </location>
</feature>
<feature type="glycosylation site" description="N-linked (GlcNAc...) asparagine" evidence="3">
    <location>
        <position position="109"/>
    </location>
</feature>
<feature type="glycosylation site" description="N-linked (GlcNAc...) asparagine" evidence="3">
    <location>
        <position position="129"/>
    </location>
</feature>
<feature type="glycosylation site" description="N-linked (GlcNAc...) asparagine" evidence="3">
    <location>
        <position position="204"/>
    </location>
</feature>
<feature type="disulfide bond" evidence="4">
    <location>
        <begin position="33"/>
        <end position="261"/>
    </location>
</feature>
<feature type="disulfide bond" evidence="4">
    <location>
        <begin position="41"/>
        <end position="112"/>
    </location>
</feature>
<feature type="splice variant" id="VSP_015793" description="In isoform 2." evidence="13 14 15">
    <original>T</original>
    <variation>TAFNTDQGSACSYEEEKGGCKL</variation>
    <location>
        <position position="131"/>
    </location>
</feature>
<dbReference type="EMBL" id="Z25524">
    <property type="protein sequence ID" value="CAA80978.1"/>
    <property type="molecule type" value="mRNA"/>
</dbReference>
<dbReference type="EMBL" id="AB012693">
    <property type="protein sequence ID" value="BAA25401.1"/>
    <property type="molecule type" value="mRNA"/>
</dbReference>
<dbReference type="EMBL" id="BC009094">
    <property type="protein sequence ID" value="AAH09094.1"/>
    <property type="molecule type" value="mRNA"/>
</dbReference>
<dbReference type="EMBL" id="BC012667">
    <property type="protein sequence ID" value="AAH12667.1"/>
    <property type="molecule type" value="mRNA"/>
</dbReference>
<dbReference type="CCDS" id="CCDS28212.1">
    <molecule id="Q61735-2"/>
</dbReference>
<dbReference type="PIR" id="S36646">
    <property type="entry name" value="S36646"/>
</dbReference>
<dbReference type="RefSeq" id="NP_001355344.1">
    <molecule id="Q61735-1"/>
    <property type="nucleotide sequence ID" value="NM_001368415.1"/>
</dbReference>
<dbReference type="RefSeq" id="NP_034711.1">
    <molecule id="Q61735-2"/>
    <property type="nucleotide sequence ID" value="NM_010581.3"/>
</dbReference>
<dbReference type="RefSeq" id="XP_006521874.1">
    <property type="nucleotide sequence ID" value="XM_006521811.3"/>
</dbReference>
<dbReference type="SMR" id="Q61735"/>
<dbReference type="BioGRID" id="200835">
    <property type="interactions" value="14"/>
</dbReference>
<dbReference type="FunCoup" id="Q61735">
    <property type="interactions" value="571"/>
</dbReference>
<dbReference type="IntAct" id="Q61735">
    <property type="interactions" value="5"/>
</dbReference>
<dbReference type="STRING" id="10090.ENSMUSP00000099853"/>
<dbReference type="GuidetoPHARMACOLOGY" id="2943"/>
<dbReference type="GlyConnect" id="2479">
    <property type="glycosylation" value="23 N-Linked glycans (3 sites)"/>
</dbReference>
<dbReference type="GlyCosmos" id="Q61735">
    <property type="glycosylation" value="7 sites, 23 glycans"/>
</dbReference>
<dbReference type="GlyGen" id="Q61735">
    <property type="glycosylation" value="9 sites, 29 N-linked glycans (5 sites), 1 O-linked glycan (1 site)"/>
</dbReference>
<dbReference type="iPTMnet" id="Q61735"/>
<dbReference type="PhosphoSitePlus" id="Q61735"/>
<dbReference type="SwissPalm" id="Q61735"/>
<dbReference type="jPOST" id="Q61735"/>
<dbReference type="PaxDb" id="10090-ENSMUSP00000099853"/>
<dbReference type="PeptideAtlas" id="Q61735"/>
<dbReference type="ProteomicsDB" id="279982">
    <molecule id="Q61735-1"/>
</dbReference>
<dbReference type="ProteomicsDB" id="279983">
    <molecule id="Q61735-2"/>
</dbReference>
<dbReference type="Pumba" id="Q61735"/>
<dbReference type="Antibodypedia" id="4228">
    <property type="antibodies" value="1947 antibodies from 53 providers"/>
</dbReference>
<dbReference type="DNASU" id="16423"/>
<dbReference type="Ensembl" id="ENSMUST00000084838.14">
    <molecule id="Q61735-2"/>
    <property type="protein sequence ID" value="ENSMUSP00000099853.5"/>
    <property type="gene ID" value="ENSMUSG00000055447.20"/>
</dbReference>
<dbReference type="GeneID" id="16423"/>
<dbReference type="KEGG" id="mmu:16423"/>
<dbReference type="UCSC" id="uc007zkg.1">
    <molecule id="Q61735-2"/>
    <property type="organism name" value="mouse"/>
</dbReference>
<dbReference type="UCSC" id="uc007zkh.1">
    <molecule id="Q61735-1"/>
    <property type="organism name" value="mouse"/>
</dbReference>
<dbReference type="AGR" id="MGI:96617"/>
<dbReference type="CTD" id="961"/>
<dbReference type="MGI" id="MGI:96617">
    <property type="gene designation" value="Cd47"/>
</dbReference>
<dbReference type="VEuPathDB" id="HostDB:ENSMUSG00000055447"/>
<dbReference type="eggNOG" id="ENOG502RYTQ">
    <property type="taxonomic scope" value="Eukaryota"/>
</dbReference>
<dbReference type="GeneTree" id="ENSGT00390000007697"/>
<dbReference type="HOGENOM" id="CLU_860392_0_0_1"/>
<dbReference type="InParanoid" id="Q61735"/>
<dbReference type="PhylomeDB" id="Q61735"/>
<dbReference type="TreeFam" id="TF336026"/>
<dbReference type="Reactome" id="R-MMU-202733">
    <property type="pathway name" value="Cell surface interactions at the vascular wall"/>
</dbReference>
<dbReference type="Reactome" id="R-MMU-216083">
    <property type="pathway name" value="Integrin cell surface interactions"/>
</dbReference>
<dbReference type="Reactome" id="R-MMU-391160">
    <property type="pathway name" value="Signal regulatory protein family interactions"/>
</dbReference>
<dbReference type="Reactome" id="R-MMU-6798695">
    <property type="pathway name" value="Neutrophil degranulation"/>
</dbReference>
<dbReference type="BioGRID-ORCS" id="16423">
    <property type="hits" value="6 hits in 80 CRISPR screens"/>
</dbReference>
<dbReference type="ChiTaRS" id="Cd47">
    <property type="organism name" value="mouse"/>
</dbReference>
<dbReference type="PRO" id="PR:Q61735"/>
<dbReference type="Proteomes" id="UP000000589">
    <property type="component" value="Chromosome 16"/>
</dbReference>
<dbReference type="RNAct" id="Q61735">
    <property type="molecule type" value="protein"/>
</dbReference>
<dbReference type="Bgee" id="ENSMUSG00000055447">
    <property type="expression patterns" value="Expressed in fetal liver hematopoietic progenitor cell and 267 other cell types or tissues"/>
</dbReference>
<dbReference type="ExpressionAtlas" id="Q61735">
    <property type="expression patterns" value="baseline and differential"/>
</dbReference>
<dbReference type="GO" id="GO:0070062">
    <property type="term" value="C:extracellular exosome"/>
    <property type="evidence" value="ECO:0000314"/>
    <property type="project" value="MGI"/>
</dbReference>
<dbReference type="GO" id="GO:0098978">
    <property type="term" value="C:glutamatergic synapse"/>
    <property type="evidence" value="ECO:0000314"/>
    <property type="project" value="SynGO"/>
</dbReference>
<dbReference type="GO" id="GO:0005886">
    <property type="term" value="C:plasma membrane"/>
    <property type="evidence" value="ECO:0000314"/>
    <property type="project" value="MGI"/>
</dbReference>
<dbReference type="GO" id="GO:0098793">
    <property type="term" value="C:presynapse"/>
    <property type="evidence" value="ECO:0000314"/>
    <property type="project" value="SynGO"/>
</dbReference>
<dbReference type="GO" id="GO:0070053">
    <property type="term" value="F:thrombospondin receptor activity"/>
    <property type="evidence" value="ECO:0007669"/>
    <property type="project" value="InterPro"/>
</dbReference>
<dbReference type="GO" id="GO:0001525">
    <property type="term" value="P:angiogenesis"/>
    <property type="evidence" value="ECO:0007669"/>
    <property type="project" value="UniProtKB-KW"/>
</dbReference>
<dbReference type="GO" id="GO:0006915">
    <property type="term" value="P:apoptotic process"/>
    <property type="evidence" value="ECO:0007669"/>
    <property type="project" value="UniProtKB-KW"/>
</dbReference>
<dbReference type="GO" id="GO:0006954">
    <property type="term" value="P:inflammatory response"/>
    <property type="evidence" value="ECO:0000314"/>
    <property type="project" value="MGI"/>
</dbReference>
<dbReference type="GO" id="GO:0070487">
    <property type="term" value="P:monocyte aggregation"/>
    <property type="evidence" value="ECO:0000315"/>
    <property type="project" value="MGI"/>
</dbReference>
<dbReference type="GO" id="GO:0008228">
    <property type="term" value="P:opsonization"/>
    <property type="evidence" value="ECO:0000314"/>
    <property type="project" value="MGI"/>
</dbReference>
<dbReference type="GO" id="GO:0070237">
    <property type="term" value="P:positive regulation of activation-induced cell death of T cells"/>
    <property type="evidence" value="ECO:0000315"/>
    <property type="project" value="UniProtKB"/>
</dbReference>
<dbReference type="GO" id="GO:0022409">
    <property type="term" value="P:positive regulation of cell-cell adhesion"/>
    <property type="evidence" value="ECO:0007669"/>
    <property type="project" value="InterPro"/>
</dbReference>
<dbReference type="GO" id="GO:0050729">
    <property type="term" value="P:positive regulation of inflammatory response"/>
    <property type="evidence" value="ECO:0000315"/>
    <property type="project" value="MGI"/>
</dbReference>
<dbReference type="GO" id="GO:0050766">
    <property type="term" value="P:positive regulation of phagocytosis"/>
    <property type="evidence" value="ECO:0000314"/>
    <property type="project" value="MGI"/>
</dbReference>
<dbReference type="GO" id="GO:0045428">
    <property type="term" value="P:regulation of nitric oxide biosynthetic process"/>
    <property type="evidence" value="ECO:0000314"/>
    <property type="project" value="ARUK-UCL"/>
</dbReference>
<dbReference type="GO" id="GO:1905806">
    <property type="term" value="P:regulation of synapse pruning"/>
    <property type="evidence" value="ECO:0000314"/>
    <property type="project" value="SynGO"/>
</dbReference>
<dbReference type="GO" id="GO:0009617">
    <property type="term" value="P:response to bacterium"/>
    <property type="evidence" value="ECO:0000315"/>
    <property type="project" value="MGI"/>
</dbReference>
<dbReference type="CDD" id="cd16090">
    <property type="entry name" value="IgV_CD47"/>
    <property type="match status" value="1"/>
</dbReference>
<dbReference type="FunFam" id="2.60.40.10:FF:000521">
    <property type="entry name" value="leukocyte surface antigen CD47"/>
    <property type="match status" value="1"/>
</dbReference>
<dbReference type="Gene3D" id="2.60.40.10">
    <property type="entry name" value="Immunoglobulins"/>
    <property type="match status" value="1"/>
</dbReference>
<dbReference type="InterPro" id="IPR006704">
    <property type="entry name" value="CD47"/>
</dbReference>
<dbReference type="InterPro" id="IPR013147">
    <property type="entry name" value="CD47-like_TM"/>
</dbReference>
<dbReference type="InterPro" id="IPR013270">
    <property type="entry name" value="CD47_Vset"/>
</dbReference>
<dbReference type="InterPro" id="IPR007110">
    <property type="entry name" value="Ig-like_dom"/>
</dbReference>
<dbReference type="InterPro" id="IPR013783">
    <property type="entry name" value="Ig-like_fold"/>
</dbReference>
<dbReference type="InterPro" id="IPR037805">
    <property type="entry name" value="IgV_CD47"/>
</dbReference>
<dbReference type="PANTHER" id="PTHR10613">
    <property type="entry name" value="LEUKOCYTE SURFACE ANTIGEN CD47"/>
    <property type="match status" value="1"/>
</dbReference>
<dbReference type="PANTHER" id="PTHR10613:SF0">
    <property type="entry name" value="LEUKOCYTE SURFACE ANTIGEN CD47"/>
    <property type="match status" value="1"/>
</dbReference>
<dbReference type="Pfam" id="PF04549">
    <property type="entry name" value="CD47"/>
    <property type="match status" value="1"/>
</dbReference>
<dbReference type="Pfam" id="PF08204">
    <property type="entry name" value="V-set_CD47"/>
    <property type="match status" value="1"/>
</dbReference>
<dbReference type="PROSITE" id="PS50835">
    <property type="entry name" value="IG_LIKE"/>
    <property type="match status" value="1"/>
</dbReference>
<protein>
    <recommendedName>
        <fullName>Leukocyte surface antigen CD47</fullName>
    </recommendedName>
    <alternativeName>
        <fullName>Integrin-associated protein</fullName>
        <shortName>IAP</shortName>
    </alternativeName>
    <cdAntigenName>CD47</cdAntigenName>
</protein>
<proteinExistence type="evidence at protein level"/>
<comment type="function">
    <text evidence="1 2 5 6 7 8 9 10 11">Adhesive protein that mediates cell-to-cell interactions (By similarity). Acts as a receptor for thrombospondin THBS1 and as modulator of integrin signaling through the activation of heterotrimeric G proteins (By similarity). Involved in signal transduction, cardiovascular homeostasis, inflammation, apoptosis, angiogenesis, cellular self-renewal, and immunoregulation (PubMed:20610415, PubMed:23591719, PubMed:27742621). Plays a role in modulating pulmonary endothelin EDN1 signaling (PubMed:27742621). Modulates nitrous oxide (NO) signaling, in response to THBS1, hence playing a role as a pressor agent, supporting blood pressure (PubMed:20610415). Plays an important role in memory formation and synaptic plasticity in the hippocampus (By similarity). Receptor for SIRPA, binding to which prevents maturation of immature dendritic cells and inhibits cytokine production by mature dendritic cells (By similarity). Interaction with SIRPG mediates cell-cell adhesion, enhances superantigen-dependent T-cell-mediated proliferation and costimulates T-cell activation (By similarity). Positively modulates FAS-dependent apoptosis in T-cells, perhaps by enhancing FAS clustering (PubMed:15917238). Plays a role in suppressing angiogenesis and may be involved in metabolic dysregulation during normal aging (PubMed:32679764). In response to THBS1, negatively modulates wound healing (PubMed:18156939). Inhibits stem cell self-renewal, in response to THBS1, probably by regulation of the stem cell transcription factors POU5F1/OCT4, SOX2, MYC/c-Myc and KLF4 (PubMed:23591719). May play a role in membrane transport and/or integrin dependent signal transduction (By similarity). May prevent premature elimination of red blood cells (PubMed:10856220).</text>
</comment>
<comment type="subunit">
    <text evidence="2 5">Monomer (By similarity). Interacts with THBS1 (via the C-terminal domain) (By similarity). Interacts with SIRPA (PubMed:10856220). Interacts with FAS/CD95; interaction may be enhanced by functional activation (By similarity). Interacts with SIRPG, UBQLN1 and UBQLN2 (By similarity). May interact with fibrinogen (By similarity).</text>
</comment>
<comment type="subcellular location">
    <subcellularLocation>
        <location evidence="12">Cell membrane</location>
        <topology evidence="12">Multi-pass membrane protein</topology>
    </subcellularLocation>
</comment>
<comment type="alternative products">
    <event type="alternative splicing"/>
    <isoform>
        <id>Q61735-1</id>
        <name>1</name>
        <sequence type="displayed"/>
    </isoform>
    <isoform>
        <id>Q61735-2</id>
        <name>2</name>
        <sequence type="described" ref="VSP_015793"/>
    </isoform>
</comment>
<comment type="induction">
    <text evidence="10 11">Expression increases in lungs following chronic hypoxia (PubMed:27742621). Expression in arteries increases in normal aging (PubMed:32679764).</text>
</comment>
<comment type="disruption phenotype">
    <text evidence="7 8 9 10 11">Knockout endothelial cells have increased basal endothelial NO synthase (eNOS) activity (PubMed:20610415). Abnormally low resting mean arterial pressure (MAP), systolic blood pressure (SBP), and diastolic blood pressure (DBP) (PubMed:20610415). Endothelin receptors EDNRA and EDNRB are significantly decreased in blood vessels (PubMed:20610415). Suppresses hypoxia-mediated increase in right-ventricle maximum systolic pressure and pulmonary arterial thickening (PubMed:27742621). Suppresses hypoxia-mediated induction of pulmonary endothelin EDN1 and endothelin receptor EDNRA (PubMed:27742621). Abolishes age-associated induction of arterial THBS1 mRNA (PubMed:32679764). Increased proliferation and migration of arterial endothelial cells and enhanced sprouting angiogenesis (PubMed:32679764). Increased expression of matrix metalloproteinases MMP2 and MMP9 in endothelial cells from aged mice (at protein level) (PubMed:32679764). Improved glucose tolerance and insulin sensitivity in aged individuals by comparison with age-matched controls (PubMed:32679764). Enhanced survival of full-thickness skin grafts, with increased numbers of functional vessels in wound beds (PubMed:18156939). Increased mRNA levels for POU5F1/Oct4, SOX2, MYC/c-Myc, KLF4 and NES/Nestin; significant up-regulation in spleen; moderately increased expression in lung, except for KLF4 (PubMed:23591719).</text>
</comment>
<sequence>MWPLAAALLLGSCCCGSAQLLFSNVNSIEFTSCNETVVIPCIVRNVEAQSTEEMFVKWKLNKSYIFIYDGNKNSTTTDQNFTSAKISVSDLINGIASLKMDKRDAMVGNYTCEVTELSREGKTVIELKNRTVSWFSPNEKILIVIFPILAILLFWGKFGILTLKYKSSHTNKRIILLLVAGLVLTVIVVVGAILLIPGEKPVKNASGLGLIVISTGILILLQYNVFMTAFGMTSFTIAILITQVLGYVLALVGLCLCIMACEPVHGPLLISGLGIIALAELLGLVYMKFVASNQRTIQPPRNR</sequence>
<accession>Q61735</accession>
<accession>Q921Z2</accession>
<reference key="1">
    <citation type="journal article" date="1993" name="J. Cell Biol.">
        <title>Molecular cloning of integrin-associated protein: an immunoglobulin family member with multiple membrane spanning domains implicated in alpha-v beta-3-dependent ligand binding.</title>
        <authorList>
            <person name="Lindberg F.P."/>
            <person name="Gresham H.D."/>
            <person name="Schwarz E."/>
            <person name="Brown E.J."/>
        </authorList>
    </citation>
    <scope>NUCLEOTIDE SEQUENCE [MRNA] (ISOFORM 2)</scope>
    <scope>SUBCELLULAR LOCATION</scope>
    <source>
        <tissue>Pre-B cell</tissue>
    </source>
</reference>
<reference key="2">
    <citation type="journal article" date="1998" name="J. Biochem.">
        <title>Integrin-associated protein (IAP, also termed CD47) is involved in stroma-supported erythropoiesis.</title>
        <authorList>
            <person name="Furusawa T."/>
            <person name="Yanai N."/>
            <person name="Hara T."/>
            <person name="Miyajima A."/>
            <person name="Obinata M."/>
        </authorList>
    </citation>
    <scope>NUCLEOTIDE SEQUENCE [MRNA] (ISOFORM 2)</scope>
    <source>
        <strain>C57BL/6J</strain>
        <tissue>Stromal cell</tissue>
    </source>
</reference>
<reference key="3">
    <citation type="journal article" date="2004" name="Genome Res.">
        <title>The status, quality, and expansion of the NIH full-length cDNA project: the Mammalian Gene Collection (MGC).</title>
        <authorList>
            <consortium name="The MGC Project Team"/>
        </authorList>
    </citation>
    <scope>NUCLEOTIDE SEQUENCE [LARGE SCALE MRNA] (ISOFORM 1)</scope>
    <scope>NUCLEOTIDE SEQUENCE [LARGE SCALE MRNA] OF 83-303 (ISOFORM 2)</scope>
    <source>
        <strain>FVB/N</strain>
        <tissue>Mammary gland</tissue>
        <tissue>Salivary gland</tissue>
    </source>
</reference>
<reference key="4">
    <citation type="submission" date="2007-04" db="UniProtKB">
        <authorList>
            <person name="Lubec G."/>
            <person name="Kang S.U."/>
        </authorList>
    </citation>
    <scope>PROTEIN SEQUENCE OF 86-99</scope>
    <scope>IDENTIFICATION BY MASS SPECTROMETRY</scope>
    <source>
        <strain>C57BL/6J</strain>
        <tissue>Brain</tissue>
    </source>
</reference>
<reference key="5">
    <citation type="journal article" date="2000" name="Science">
        <title>Role of CD47 as a marker of self on red blood cells.</title>
        <authorList>
            <person name="Oldenborg P.A."/>
            <person name="Zheleznyak A."/>
            <person name="Fang Y.F."/>
            <person name="Lagenaur C.F."/>
            <person name="Gresham H.D."/>
            <person name="Lindberg F.P."/>
        </authorList>
    </citation>
    <scope>FUNCTION</scope>
    <scope>INTERACTION WITH SIRPA</scope>
</reference>
<reference key="6">
    <citation type="journal article" date="2005" name="J. Biol. Chem.">
        <title>CD47 augments Fas/CD95-mediated apoptosis.</title>
        <authorList>
            <person name="Manna P.P."/>
            <person name="Dimitry J."/>
            <person name="Oldenborg P.A."/>
            <person name="Frazier W.A."/>
        </authorList>
    </citation>
    <scope>FUNCTION</scope>
</reference>
<reference key="7">
    <citation type="journal article" date="2008" name="Ann. Surg.">
        <title>Blockade of thrombospondin-1-CD47 interactions prevents necrosis of full thickness skin grafts.</title>
        <authorList>
            <person name="Isenberg J.S."/>
            <person name="Pappan L.K."/>
            <person name="Romeo M.J."/>
            <person name="Abu-Asab M."/>
            <person name="Tsokos M."/>
            <person name="Wink D.A."/>
            <person name="Frazier W.A."/>
            <person name="Roberts D.D."/>
        </authorList>
    </citation>
    <scope>FUNCTION</scope>
    <scope>DISRUPTION PHENOTYPE</scope>
</reference>
<reference key="8">
    <citation type="journal article" date="2010" name="Cardiovasc. Res.">
        <title>Thrombospondin-1 supports blood pressure by limiting eNOS activation and endothelial-dependent vasorelaxation.</title>
        <authorList>
            <person name="Bauer E.M."/>
            <person name="Qin Y."/>
            <person name="Miller T.W."/>
            <person name="Bandle R.W."/>
            <person name="Csanyi G."/>
            <person name="Pagano P.J."/>
            <person name="Bauer P.M."/>
            <person name="Schnermann J."/>
            <person name="Roberts D.D."/>
            <person name="Isenberg J.S."/>
        </authorList>
    </citation>
    <scope>FUNCTION</scope>
    <scope>DISRUPTION PHENOTYPE</scope>
</reference>
<reference key="9">
    <citation type="journal article" date="2010" name="Cell">
        <title>A tissue-specific atlas of mouse protein phosphorylation and expression.</title>
        <authorList>
            <person name="Huttlin E.L."/>
            <person name="Jedrychowski M.P."/>
            <person name="Elias J.E."/>
            <person name="Goswami T."/>
            <person name="Rad R."/>
            <person name="Beausoleil S.A."/>
            <person name="Villen J."/>
            <person name="Haas W."/>
            <person name="Sowa M.E."/>
            <person name="Gygi S.P."/>
        </authorList>
    </citation>
    <scope>IDENTIFICATION BY MASS SPECTROMETRY [LARGE SCALE ANALYSIS]</scope>
    <source>
        <tissue>Brain</tissue>
        <tissue>Brown adipose tissue</tissue>
        <tissue>Kidney</tissue>
        <tissue>Lung</tissue>
        <tissue>Spleen</tissue>
        <tissue>Testis</tissue>
    </source>
</reference>
<reference key="10">
    <citation type="journal article" date="2013" name="Sci. Rep.">
        <title>Thrombospondin-1 signaling through CD47 inhibits self-renewal by regulating c-Myc and other stem cell transcription factors.</title>
        <authorList>
            <person name="Kaur S."/>
            <person name="Soto-Pantoja D.R."/>
            <person name="Stein E.V."/>
            <person name="Liu C."/>
            <person name="Elkahloun A.G."/>
            <person name="Pendrak M.L."/>
            <person name="Nicolae A."/>
            <person name="Singh S.P."/>
            <person name="Nie Z."/>
            <person name="Levens D."/>
            <person name="Isenberg J.S."/>
            <person name="Roberts D.D."/>
        </authorList>
    </citation>
    <scope>FUNCTION</scope>
    <scope>DISRUPTION PHENOTYPE</scope>
</reference>
<reference key="11">
    <citation type="journal article" date="2017" name="Cardiovasc. Res.">
        <title>TSP1-CD47 signaling is upregulated in clinical pulmonary hypertension and contributes to pulmonary arterial vasculopathy and dysfunction.</title>
        <authorList>
            <person name="Rogers N.M."/>
            <person name="Sharifi-Sanjani M."/>
            <person name="Yao M."/>
            <person name="Ghimire K."/>
            <person name="Bienes-Martinez R."/>
            <person name="Mutchler S.M."/>
            <person name="Knupp H.E."/>
            <person name="Baust J."/>
            <person name="Novelli E.M."/>
            <person name="Ross M."/>
            <person name="St Croix C."/>
            <person name="Kutten J.C."/>
            <person name="Czajka C.A."/>
            <person name="Sembrat J.C."/>
            <person name="Rojas M."/>
            <person name="Labrousse-Arias D."/>
            <person name="Bachman T.N."/>
            <person name="Vanderpool R.R."/>
            <person name="Zuckerbraun B.S."/>
            <person name="Champion H.C."/>
            <person name="Mora A.L."/>
            <person name="Straub A.C."/>
            <person name="Bilonick R.A."/>
            <person name="Calzada M.J."/>
            <person name="Isenberg J.S."/>
        </authorList>
    </citation>
    <scope>FUNCTION</scope>
    <scope>INDUCTION</scope>
    <scope>DISRUPTION PHENOTYPE</scope>
</reference>
<reference key="12">
    <citation type="journal article" date="2020" name="Cells">
        <title>CD47 Promotes Age-Associated Deterioration in Angiogenesis, Blood Flow and Glucose Homeostasis.</title>
        <authorList>
            <person name="Ghimire K."/>
            <person name="Li Y."/>
            <person name="Chiba T."/>
            <person name="Julovi S.M."/>
            <person name="Li J."/>
            <person name="Ross M.A."/>
            <person name="Straub A.C."/>
            <person name="O'Connell P.J."/>
            <person name="Rueegg C."/>
            <person name="Pagano P.J."/>
            <person name="Isenberg J.S."/>
            <person name="Rogers N.M."/>
        </authorList>
    </citation>
    <scope>FUNCTION</scope>
    <scope>INDUCTION</scope>
    <scope>DISRUPTION PHENOTYPE</scope>
</reference>
<gene>
    <name type="primary">Cd47</name>
</gene>